<keyword id="KW-0240">DNA-directed RNA polymerase</keyword>
<keyword id="KW-0460">Magnesium</keyword>
<keyword id="KW-0479">Metal-binding</keyword>
<keyword id="KW-0548">Nucleotidyltransferase</keyword>
<keyword id="KW-1185">Reference proteome</keyword>
<keyword id="KW-0804">Transcription</keyword>
<keyword id="KW-0808">Transferase</keyword>
<keyword id="KW-0862">Zinc</keyword>
<dbReference type="EC" id="2.7.7.6" evidence="1"/>
<dbReference type="EMBL" id="CP000023">
    <property type="protein sequence ID" value="AAV61466.1"/>
    <property type="molecule type" value="Genomic_DNA"/>
</dbReference>
<dbReference type="RefSeq" id="WP_011226631.1">
    <property type="nucleotide sequence ID" value="NC_006448.1"/>
</dbReference>
<dbReference type="SMR" id="Q5M2F6"/>
<dbReference type="STRING" id="264199.stu1867"/>
<dbReference type="GeneID" id="66899599"/>
<dbReference type="KEGG" id="stl:stu1867"/>
<dbReference type="PATRIC" id="fig|264199.4.peg.1849"/>
<dbReference type="eggNOG" id="COG0086">
    <property type="taxonomic scope" value="Bacteria"/>
</dbReference>
<dbReference type="HOGENOM" id="CLU_000524_3_1_9"/>
<dbReference type="Proteomes" id="UP000001170">
    <property type="component" value="Chromosome"/>
</dbReference>
<dbReference type="GO" id="GO:0000428">
    <property type="term" value="C:DNA-directed RNA polymerase complex"/>
    <property type="evidence" value="ECO:0007669"/>
    <property type="project" value="UniProtKB-KW"/>
</dbReference>
<dbReference type="GO" id="GO:0003677">
    <property type="term" value="F:DNA binding"/>
    <property type="evidence" value="ECO:0007669"/>
    <property type="project" value="UniProtKB-UniRule"/>
</dbReference>
<dbReference type="GO" id="GO:0003899">
    <property type="term" value="F:DNA-directed RNA polymerase activity"/>
    <property type="evidence" value="ECO:0007669"/>
    <property type="project" value="UniProtKB-UniRule"/>
</dbReference>
<dbReference type="GO" id="GO:0000287">
    <property type="term" value="F:magnesium ion binding"/>
    <property type="evidence" value="ECO:0007669"/>
    <property type="project" value="UniProtKB-UniRule"/>
</dbReference>
<dbReference type="GO" id="GO:0008270">
    <property type="term" value="F:zinc ion binding"/>
    <property type="evidence" value="ECO:0007669"/>
    <property type="project" value="UniProtKB-UniRule"/>
</dbReference>
<dbReference type="GO" id="GO:0006351">
    <property type="term" value="P:DNA-templated transcription"/>
    <property type="evidence" value="ECO:0007669"/>
    <property type="project" value="UniProtKB-UniRule"/>
</dbReference>
<dbReference type="CDD" id="cd02655">
    <property type="entry name" value="RNAP_beta'_C"/>
    <property type="match status" value="1"/>
</dbReference>
<dbReference type="CDD" id="cd01609">
    <property type="entry name" value="RNAP_beta'_N"/>
    <property type="match status" value="1"/>
</dbReference>
<dbReference type="FunFam" id="1.10.150.390:FF:000002">
    <property type="entry name" value="DNA-directed RNA polymerase subunit beta"/>
    <property type="match status" value="1"/>
</dbReference>
<dbReference type="FunFam" id="4.10.860.120:FF:000001">
    <property type="entry name" value="DNA-directed RNA polymerase subunit beta"/>
    <property type="match status" value="1"/>
</dbReference>
<dbReference type="Gene3D" id="1.10.132.30">
    <property type="match status" value="1"/>
</dbReference>
<dbReference type="Gene3D" id="1.10.150.390">
    <property type="match status" value="1"/>
</dbReference>
<dbReference type="Gene3D" id="1.10.1790.20">
    <property type="match status" value="1"/>
</dbReference>
<dbReference type="Gene3D" id="1.10.40.90">
    <property type="match status" value="1"/>
</dbReference>
<dbReference type="Gene3D" id="2.40.40.20">
    <property type="match status" value="1"/>
</dbReference>
<dbReference type="Gene3D" id="2.40.50.100">
    <property type="match status" value="1"/>
</dbReference>
<dbReference type="Gene3D" id="4.10.860.120">
    <property type="entry name" value="RNA polymerase II, clamp domain"/>
    <property type="match status" value="1"/>
</dbReference>
<dbReference type="Gene3D" id="1.10.274.100">
    <property type="entry name" value="RNA polymerase Rpb1, domain 3"/>
    <property type="match status" value="1"/>
</dbReference>
<dbReference type="HAMAP" id="MF_01322">
    <property type="entry name" value="RNApol_bact_RpoC"/>
    <property type="match status" value="1"/>
</dbReference>
<dbReference type="InterPro" id="IPR045867">
    <property type="entry name" value="DNA-dir_RpoC_beta_prime"/>
</dbReference>
<dbReference type="InterPro" id="IPR012754">
    <property type="entry name" value="DNA-dir_RpoC_beta_prime_bact"/>
</dbReference>
<dbReference type="InterPro" id="IPR000722">
    <property type="entry name" value="RNA_pol_asu"/>
</dbReference>
<dbReference type="InterPro" id="IPR006592">
    <property type="entry name" value="RNA_pol_N"/>
</dbReference>
<dbReference type="InterPro" id="IPR007080">
    <property type="entry name" value="RNA_pol_Rpb1_1"/>
</dbReference>
<dbReference type="InterPro" id="IPR007066">
    <property type="entry name" value="RNA_pol_Rpb1_3"/>
</dbReference>
<dbReference type="InterPro" id="IPR042102">
    <property type="entry name" value="RNA_pol_Rpb1_3_sf"/>
</dbReference>
<dbReference type="InterPro" id="IPR007083">
    <property type="entry name" value="RNA_pol_Rpb1_4"/>
</dbReference>
<dbReference type="InterPro" id="IPR007081">
    <property type="entry name" value="RNA_pol_Rpb1_5"/>
</dbReference>
<dbReference type="InterPro" id="IPR044893">
    <property type="entry name" value="RNA_pol_Rpb1_clamp_domain"/>
</dbReference>
<dbReference type="InterPro" id="IPR038120">
    <property type="entry name" value="Rpb1_funnel_sf"/>
</dbReference>
<dbReference type="NCBIfam" id="TIGR02386">
    <property type="entry name" value="rpoC_TIGR"/>
    <property type="match status" value="1"/>
</dbReference>
<dbReference type="PANTHER" id="PTHR19376">
    <property type="entry name" value="DNA-DIRECTED RNA POLYMERASE"/>
    <property type="match status" value="1"/>
</dbReference>
<dbReference type="PANTHER" id="PTHR19376:SF54">
    <property type="entry name" value="DNA-DIRECTED RNA POLYMERASE SUBUNIT BETA"/>
    <property type="match status" value="1"/>
</dbReference>
<dbReference type="Pfam" id="PF04997">
    <property type="entry name" value="RNA_pol_Rpb1_1"/>
    <property type="match status" value="1"/>
</dbReference>
<dbReference type="Pfam" id="PF00623">
    <property type="entry name" value="RNA_pol_Rpb1_2"/>
    <property type="match status" value="1"/>
</dbReference>
<dbReference type="Pfam" id="PF04983">
    <property type="entry name" value="RNA_pol_Rpb1_3"/>
    <property type="match status" value="1"/>
</dbReference>
<dbReference type="Pfam" id="PF05000">
    <property type="entry name" value="RNA_pol_Rpb1_4"/>
    <property type="match status" value="1"/>
</dbReference>
<dbReference type="Pfam" id="PF04998">
    <property type="entry name" value="RNA_pol_Rpb1_5"/>
    <property type="match status" value="1"/>
</dbReference>
<dbReference type="SMART" id="SM00663">
    <property type="entry name" value="RPOLA_N"/>
    <property type="match status" value="1"/>
</dbReference>
<dbReference type="SUPFAM" id="SSF64484">
    <property type="entry name" value="beta and beta-prime subunits of DNA dependent RNA-polymerase"/>
    <property type="match status" value="1"/>
</dbReference>
<comment type="function">
    <text evidence="1">DNA-dependent RNA polymerase catalyzes the transcription of DNA into RNA using the four ribonucleoside triphosphates as substrates.</text>
</comment>
<comment type="catalytic activity">
    <reaction evidence="1">
        <text>RNA(n) + a ribonucleoside 5'-triphosphate = RNA(n+1) + diphosphate</text>
        <dbReference type="Rhea" id="RHEA:21248"/>
        <dbReference type="Rhea" id="RHEA-COMP:14527"/>
        <dbReference type="Rhea" id="RHEA-COMP:17342"/>
        <dbReference type="ChEBI" id="CHEBI:33019"/>
        <dbReference type="ChEBI" id="CHEBI:61557"/>
        <dbReference type="ChEBI" id="CHEBI:140395"/>
        <dbReference type="EC" id="2.7.7.6"/>
    </reaction>
</comment>
<comment type="cofactor">
    <cofactor evidence="1">
        <name>Mg(2+)</name>
        <dbReference type="ChEBI" id="CHEBI:18420"/>
    </cofactor>
    <text evidence="1">Binds 1 Mg(2+) ion per subunit.</text>
</comment>
<comment type="cofactor">
    <cofactor evidence="1">
        <name>Zn(2+)</name>
        <dbReference type="ChEBI" id="CHEBI:29105"/>
    </cofactor>
    <text evidence="1">Binds 2 Zn(2+) ions per subunit.</text>
</comment>
<comment type="subunit">
    <text evidence="1">The RNAP catalytic core consists of 2 alpha, 1 beta, 1 beta' and 1 omega subunit. When a sigma factor is associated with the core the holoenzyme is formed, which can initiate transcription.</text>
</comment>
<comment type="similarity">
    <text evidence="1">Belongs to the RNA polymerase beta' chain family.</text>
</comment>
<protein>
    <recommendedName>
        <fullName evidence="1">DNA-directed RNA polymerase subunit beta'</fullName>
        <shortName evidence="1">RNAP subunit beta'</shortName>
        <ecNumber evidence="1">2.7.7.6</ecNumber>
    </recommendedName>
    <alternativeName>
        <fullName evidence="1">RNA polymerase subunit beta'</fullName>
    </alternativeName>
    <alternativeName>
        <fullName evidence="1">Transcriptase subunit beta'</fullName>
    </alternativeName>
</protein>
<sequence length="1212" mass="135330">MVDVNRFKSMQITLASPTKVRSWSYGEVKKPETINYRTLKPEREGLFDEVIFGPTKDWECACGKYKRIRYKGIVCDRCGVEVTRAKVRRERMGHIELKAPVSHIWYFKGIPSRMGLTLDMSPRALEEVIYFAAYVVIDPKETPLERKSLLTEREYREKLQEYGQGSFVAKMGAEAIQDLLKQVDLEAEIAELKEELKTATGQKRFKAVRRLDVLDAFYKSGNKPEWMVLNILPVLPPDLRPMVQLDGGRFAASDLNDLYRRVINRNNRLARLLELGAPGIIVQNEKRMLQEAVDALIDNGRRGRPITGPGSRPLKSLSHMLKGKQGRFRQNLLGKRVDFSGRSVIAVGPTLKMYQCGVPRLMAIELFKPFVMREIVAREYAGNVKAAKRMVERGDERIWDILEDVIKEHPVLLNRAPTLHRLGIQAFEPVLIDGKALRLHPLVCEAYNADFDGDQMAIHVPLSEEAQAEARLLLLAAEHILNPKDGKPVVTPSQDMVLGNYYLTMEDEGREGEGMIFKDIDEAVMAYHNGYVHLHSRVGIAVDSMPDKPWKENQLHKILVTTVGKILFNSIIPSEIPYLQETTNENLTDSTPDKYFLEPGQDIQTVIDSLEINAPFKKKHLGNIIAEIFKRLRTTETSAFLDRLKDLGYYYSTLAGLTVGIADIPVIDNKQEIIDAAHHRVEEINKAFRRGLMTEDDRYVAVTTTWREAKDALEKRLIETQDPKNPIVMMMDSGARGNISNFSQLAGMRGLMAAPNGRIMELPILSNFREGLSVLEMFFSTHGARKGMTDTALKTADSGYLTRRLVDVAQDVIIREDDCGTDRGLVIRAITDGKEVTETLEERLFGRYTKKSVKHPETGEVIVGPDTLITEDMAAAIVNAGVEEVTIRSVFTCKTRHGVCRHCYGINLATGDAVEVGEAVGTIAAQSIGEPGTQLTMRTFHTGGVASNTDITQGLPRIQEIFEARNPKGEAVITEVKGTVIEIEEDAATRTKKVFVQGKTGMGEYVVPFTARMKVEVGDEVHRGEALTEGSIQPKRLLEVRDTLSVETYLLAEVQKVYRSQGVEIGDKHVEVMVRQMLRKVRVMDPGDTDLLPGTLMDISDFTDANKDIVISGGVPATSRPVLLGITKASLETNSFLSAASFQETTRVLTDAAIRGKKDHLIGLKENVIIGKIIPAGTGMARYRNIEPLAVNEVEVIENIAVDEAIVESSED</sequence>
<accession>Q5M2F6</accession>
<feature type="chain" id="PRO_0000067816" description="DNA-directed RNA polymerase subunit beta'">
    <location>
        <begin position="1"/>
        <end position="1212"/>
    </location>
</feature>
<feature type="binding site" evidence="1">
    <location>
        <position position="60"/>
    </location>
    <ligand>
        <name>Zn(2+)</name>
        <dbReference type="ChEBI" id="CHEBI:29105"/>
        <label>1</label>
    </ligand>
</feature>
<feature type="binding site" evidence="1">
    <location>
        <position position="62"/>
    </location>
    <ligand>
        <name>Zn(2+)</name>
        <dbReference type="ChEBI" id="CHEBI:29105"/>
        <label>1</label>
    </ligand>
</feature>
<feature type="binding site" evidence="1">
    <location>
        <position position="75"/>
    </location>
    <ligand>
        <name>Zn(2+)</name>
        <dbReference type="ChEBI" id="CHEBI:29105"/>
        <label>1</label>
    </ligand>
</feature>
<feature type="binding site" evidence="1">
    <location>
        <position position="78"/>
    </location>
    <ligand>
        <name>Zn(2+)</name>
        <dbReference type="ChEBI" id="CHEBI:29105"/>
        <label>1</label>
    </ligand>
</feature>
<feature type="binding site" evidence="1">
    <location>
        <position position="450"/>
    </location>
    <ligand>
        <name>Mg(2+)</name>
        <dbReference type="ChEBI" id="CHEBI:18420"/>
    </ligand>
</feature>
<feature type="binding site" evidence="1">
    <location>
        <position position="452"/>
    </location>
    <ligand>
        <name>Mg(2+)</name>
        <dbReference type="ChEBI" id="CHEBI:18420"/>
    </ligand>
</feature>
<feature type="binding site" evidence="1">
    <location>
        <position position="454"/>
    </location>
    <ligand>
        <name>Mg(2+)</name>
        <dbReference type="ChEBI" id="CHEBI:18420"/>
    </ligand>
</feature>
<feature type="binding site" evidence="1">
    <location>
        <position position="819"/>
    </location>
    <ligand>
        <name>Zn(2+)</name>
        <dbReference type="ChEBI" id="CHEBI:29105"/>
        <label>2</label>
    </ligand>
</feature>
<feature type="binding site" evidence="1">
    <location>
        <position position="893"/>
    </location>
    <ligand>
        <name>Zn(2+)</name>
        <dbReference type="ChEBI" id="CHEBI:29105"/>
        <label>2</label>
    </ligand>
</feature>
<feature type="binding site" evidence="1">
    <location>
        <position position="900"/>
    </location>
    <ligand>
        <name>Zn(2+)</name>
        <dbReference type="ChEBI" id="CHEBI:29105"/>
        <label>2</label>
    </ligand>
</feature>
<feature type="binding site" evidence="1">
    <location>
        <position position="903"/>
    </location>
    <ligand>
        <name>Zn(2+)</name>
        <dbReference type="ChEBI" id="CHEBI:29105"/>
        <label>2</label>
    </ligand>
</feature>
<name>RPOC_STRT2</name>
<proteinExistence type="inferred from homology"/>
<organism>
    <name type="scientific">Streptococcus thermophilus (strain ATCC BAA-250 / LMG 18311)</name>
    <dbReference type="NCBI Taxonomy" id="264199"/>
    <lineage>
        <taxon>Bacteria</taxon>
        <taxon>Bacillati</taxon>
        <taxon>Bacillota</taxon>
        <taxon>Bacilli</taxon>
        <taxon>Lactobacillales</taxon>
        <taxon>Streptococcaceae</taxon>
        <taxon>Streptococcus</taxon>
    </lineage>
</organism>
<reference key="1">
    <citation type="journal article" date="2004" name="Nat. Biotechnol.">
        <title>Complete sequence and comparative genome analysis of the dairy bacterium Streptococcus thermophilus.</title>
        <authorList>
            <person name="Bolotin A."/>
            <person name="Quinquis B."/>
            <person name="Renault P."/>
            <person name="Sorokin A."/>
            <person name="Ehrlich S.D."/>
            <person name="Kulakauskas S."/>
            <person name="Lapidus A."/>
            <person name="Goltsman E."/>
            <person name="Mazur M."/>
            <person name="Pusch G.D."/>
            <person name="Fonstein M."/>
            <person name="Overbeek R."/>
            <person name="Kyprides N."/>
            <person name="Purnelle B."/>
            <person name="Prozzi D."/>
            <person name="Ngui K."/>
            <person name="Masuy D."/>
            <person name="Hancy F."/>
            <person name="Burteau S."/>
            <person name="Boutry M."/>
            <person name="Delcour J."/>
            <person name="Goffeau A."/>
            <person name="Hols P."/>
        </authorList>
    </citation>
    <scope>NUCLEOTIDE SEQUENCE [LARGE SCALE GENOMIC DNA]</scope>
    <source>
        <strain>ATCC BAA-250 / LMG 18311</strain>
    </source>
</reference>
<evidence type="ECO:0000255" key="1">
    <source>
        <dbReference type="HAMAP-Rule" id="MF_01322"/>
    </source>
</evidence>
<gene>
    <name evidence="1" type="primary">rpoC</name>
    <name type="ordered locus">stu1867</name>
</gene>